<dbReference type="EMBL" id="AK088900">
    <property type="protein sequence ID" value="BAC40642.1"/>
    <property type="status" value="ALT_INIT"/>
    <property type="molecule type" value="mRNA"/>
</dbReference>
<dbReference type="EMBL" id="AK154818">
    <property type="protein sequence ID" value="BAE32851.1"/>
    <property type="molecule type" value="mRNA"/>
</dbReference>
<dbReference type="EMBL" id="BC023166">
    <property type="protein sequence ID" value="AAH23166.1"/>
    <property type="molecule type" value="mRNA"/>
</dbReference>
<dbReference type="EMBL" id="BC023391">
    <property type="protein sequence ID" value="AAH23391.1"/>
    <property type="molecule type" value="mRNA"/>
</dbReference>
<dbReference type="EMBL" id="BC029771">
    <property type="protein sequence ID" value="AAH29771.1"/>
    <property type="status" value="ALT_SEQ"/>
    <property type="molecule type" value="mRNA"/>
</dbReference>
<dbReference type="EMBL" id="BC056491">
    <property type="protein sequence ID" value="AAH56491.1"/>
    <property type="molecule type" value="mRNA"/>
</dbReference>
<dbReference type="EMBL" id="BC062940">
    <property type="protein sequence ID" value="AAH62940.1"/>
    <property type="status" value="ALT_INIT"/>
    <property type="molecule type" value="mRNA"/>
</dbReference>
<dbReference type="EMBL" id="AK129240">
    <property type="protein sequence ID" value="BAC98050.1"/>
    <property type="molecule type" value="mRNA"/>
</dbReference>
<dbReference type="CCDS" id="CCDS38463.1">
    <molecule id="Q3U3D7-1"/>
</dbReference>
<dbReference type="RefSeq" id="NP_766269.3">
    <molecule id="Q3U3D7-1"/>
    <property type="nucleotide sequence ID" value="NM_172681.4"/>
</dbReference>
<dbReference type="RefSeq" id="XP_006501388.1">
    <molecule id="Q3U3D7-2"/>
    <property type="nucleotide sequence ID" value="XM_006501325.2"/>
</dbReference>
<dbReference type="BioGRID" id="230845">
    <property type="interactions" value="1"/>
</dbReference>
<dbReference type="FunCoup" id="Q3U3D7">
    <property type="interactions" value="855"/>
</dbReference>
<dbReference type="STRING" id="10090.ENSMUSP00000141438"/>
<dbReference type="GlyCosmos" id="Q3U3D7">
    <property type="glycosylation" value="4 sites, No reported glycans"/>
</dbReference>
<dbReference type="GlyGen" id="Q3U3D7">
    <property type="glycosylation" value="5 sites, 2 N-linked glycans (2 sites)"/>
</dbReference>
<dbReference type="iPTMnet" id="Q3U3D7"/>
<dbReference type="PhosphoSitePlus" id="Q3U3D7"/>
<dbReference type="PaxDb" id="10090-ENSMUSP00000049808"/>
<dbReference type="PeptideAtlas" id="Q3U3D7"/>
<dbReference type="ProteomicsDB" id="254517">
    <molecule id="Q3U3D7-1"/>
</dbReference>
<dbReference type="ProteomicsDB" id="254518">
    <molecule id="Q3U3D7-2"/>
</dbReference>
<dbReference type="ProteomicsDB" id="254519">
    <molecule id="Q3U3D7-3"/>
</dbReference>
<dbReference type="Antibodypedia" id="57011">
    <property type="antibodies" value="60 antibodies from 12 providers"/>
</dbReference>
<dbReference type="DNASU" id="229473"/>
<dbReference type="Ensembl" id="ENSMUST00000191758.6">
    <molecule id="Q3U3D7-1"/>
    <property type="protein sequence ID" value="ENSMUSP00000141438.2"/>
    <property type="gene ID" value="ENSMUSG00000033767.15"/>
</dbReference>
<dbReference type="Ensembl" id="ENSMUST00000192095.6">
    <molecule id="Q3U3D7-3"/>
    <property type="protein sequence ID" value="ENSMUSP00000141607.2"/>
    <property type="gene ID" value="ENSMUSG00000033767.15"/>
</dbReference>
<dbReference type="GeneID" id="229473"/>
<dbReference type="KEGG" id="mmu:229473"/>
<dbReference type="UCSC" id="uc008ppo.1">
    <molecule id="Q3U3D7-2"/>
    <property type="organism name" value="mouse"/>
</dbReference>
<dbReference type="UCSC" id="uc008ppp.1">
    <molecule id="Q3U3D7-1"/>
    <property type="organism name" value="mouse"/>
</dbReference>
<dbReference type="UCSC" id="uc008ppq.1">
    <molecule id="Q3U3D7-3"/>
    <property type="organism name" value="mouse"/>
</dbReference>
<dbReference type="AGR" id="MGI:2443399"/>
<dbReference type="CTD" id="23240"/>
<dbReference type="MGI" id="MGI:2443399">
    <property type="gene designation" value="Tmem131l"/>
</dbReference>
<dbReference type="VEuPathDB" id="HostDB:ENSMUSG00000033767"/>
<dbReference type="eggNOG" id="KOG3620">
    <property type="taxonomic scope" value="Eukaryota"/>
</dbReference>
<dbReference type="GeneTree" id="ENSGT00530000063614"/>
<dbReference type="HOGENOM" id="CLU_004094_0_0_1"/>
<dbReference type="InParanoid" id="Q3U3D7"/>
<dbReference type="OMA" id="FINSPPY"/>
<dbReference type="OrthoDB" id="168404at2759"/>
<dbReference type="PhylomeDB" id="Q3U3D7"/>
<dbReference type="TreeFam" id="TF321435"/>
<dbReference type="BioGRID-ORCS" id="229473">
    <property type="hits" value="4 hits in 77 CRISPR screens"/>
</dbReference>
<dbReference type="ChiTaRS" id="D930015E06Rik">
    <property type="organism name" value="mouse"/>
</dbReference>
<dbReference type="PRO" id="PR:Q3U3D7"/>
<dbReference type="Proteomes" id="UP000000589">
    <property type="component" value="Chromosome 3"/>
</dbReference>
<dbReference type="RNAct" id="Q3U3D7">
    <property type="molecule type" value="protein"/>
</dbReference>
<dbReference type="Bgee" id="ENSMUSG00000033767">
    <property type="expression patterns" value="Expressed in ventricular zone and 250 other cell types or tissues"/>
</dbReference>
<dbReference type="ExpressionAtlas" id="Q3U3D7">
    <property type="expression patterns" value="baseline and differential"/>
</dbReference>
<dbReference type="GO" id="GO:0005737">
    <property type="term" value="C:cytoplasm"/>
    <property type="evidence" value="ECO:0000250"/>
    <property type="project" value="UniProtKB"/>
</dbReference>
<dbReference type="GO" id="GO:0005783">
    <property type="term" value="C:endoplasmic reticulum"/>
    <property type="evidence" value="ECO:0007669"/>
    <property type="project" value="UniProtKB-SubCell"/>
</dbReference>
<dbReference type="GO" id="GO:0005886">
    <property type="term" value="C:plasma membrane"/>
    <property type="evidence" value="ECO:0000250"/>
    <property type="project" value="UniProtKB"/>
</dbReference>
<dbReference type="GO" id="GO:0090090">
    <property type="term" value="P:negative regulation of canonical Wnt signaling pathway"/>
    <property type="evidence" value="ECO:0000250"/>
    <property type="project" value="UniProtKB"/>
</dbReference>
<dbReference type="GO" id="GO:0033088">
    <property type="term" value="P:negative regulation of immature T cell proliferation in thymus"/>
    <property type="evidence" value="ECO:0000250"/>
    <property type="project" value="UniProtKB"/>
</dbReference>
<dbReference type="GO" id="GO:0016055">
    <property type="term" value="P:Wnt signaling pathway"/>
    <property type="evidence" value="ECO:0007669"/>
    <property type="project" value="UniProtKB-KW"/>
</dbReference>
<dbReference type="FunFam" id="2.60.40.10:FF:000687">
    <property type="entry name" value="transmembrane protein 131-like isoform X3"/>
    <property type="match status" value="1"/>
</dbReference>
<dbReference type="Gene3D" id="2.60.40.10">
    <property type="entry name" value="Immunoglobulins"/>
    <property type="match status" value="1"/>
</dbReference>
<dbReference type="InterPro" id="IPR013783">
    <property type="entry name" value="Ig-like_fold"/>
</dbReference>
<dbReference type="InterPro" id="IPR055435">
    <property type="entry name" value="Ig_TMEM131L_3"/>
</dbReference>
<dbReference type="InterPro" id="IPR055436">
    <property type="entry name" value="Ig_TMEM131L_4"/>
</dbReference>
<dbReference type="InterPro" id="IPR055437">
    <property type="entry name" value="Ig_TMEM131L_5"/>
</dbReference>
<dbReference type="InterPro" id="IPR039877">
    <property type="entry name" value="TMEM131-like"/>
</dbReference>
<dbReference type="InterPro" id="IPR045695">
    <property type="entry name" value="TMEM131-like_Ig_dom2"/>
</dbReference>
<dbReference type="InterPro" id="IPR022113">
    <property type="entry name" value="TMEM131-like_N"/>
</dbReference>
<dbReference type="PANTHER" id="PTHR22050">
    <property type="entry name" value="RW1 PROTEIN HOMOLOG"/>
    <property type="match status" value="1"/>
</dbReference>
<dbReference type="PANTHER" id="PTHR22050:SF2">
    <property type="entry name" value="TRANSMEMBRANE PROTEIN 131-LIKE"/>
    <property type="match status" value="1"/>
</dbReference>
<dbReference type="Pfam" id="PF19532">
    <property type="entry name" value="Ig_TMEM131L_2nd"/>
    <property type="match status" value="1"/>
</dbReference>
<dbReference type="Pfam" id="PF24498">
    <property type="entry name" value="Ig_TMEM131L_3"/>
    <property type="match status" value="1"/>
</dbReference>
<dbReference type="Pfam" id="PF24499">
    <property type="entry name" value="Ig_TMEM131L_4"/>
    <property type="match status" value="1"/>
</dbReference>
<dbReference type="Pfam" id="PF24501">
    <property type="entry name" value="Ig_TMEM131L_5"/>
    <property type="match status" value="1"/>
</dbReference>
<dbReference type="Pfam" id="PF12371">
    <property type="entry name" value="TMEM131_like_N"/>
    <property type="match status" value="1"/>
</dbReference>
<gene>
    <name evidence="1" type="primary">Tmem131l</name>
    <name evidence="1" type="synonym">Kiaa0922</name>
</gene>
<sequence length="1597" mass="175772">MAGLRRPQSGAYRRTAAAVNLLLGVFQVLLSCCRPGGAQGQAFEPLPNVVELWQAEEGELLLPTQGDSEEDMEEPSQEQSFSDKLFIGKGLHFQPSVLDFGIQFLGHPAAKLLYAYNPSRESEVVVNSVFTAARHFHVPPVHCRVIPAMGKASFRVIFLPTEEGSIESSLFINTSSHGVFSYHVSGVGTRRVSTEGSAEQLPNAYFLLPQVQSIQLSQTQAETTNTSLLRVQLECSLHNKVCQQLKSCSLGSDDALHLEMNIIVAVENSSKQPEENTQALLDHLSIVYVATDESDTSDESAVNMYVLHSGNSLIWIQDIHHFSQKNVLSLQFEPVLLSTSTTNFTKIASFTCKAGTSCDSGIMGLRKKKASPAMQACLSSPVVQGYFRTDASTAQFHIESHETATGVWSIWYRSHFDQSIVLKDVFVSKETKHILKVLSFRGPLFLPPGCWNIFSLKLAVKGIVLNLFTNVFLTTNTGAIFAIPLQIFSAPTKEGSLGFEVLAHCGMHYFMGKSKTENPNWERSLSLDRSTWDMDSELANKLYERWKKYKSGDACRRNVLGMSQFAFTKKSKETEPFVSFLPRVVPEPNLVLNFSATALRNSAVKYFVVRNPTPQPVSLQLLPLSLYPRPEAAVRLLHKWFGTDMQMVNLSTGEFQLTQACPYQGEPSEESSLGALHVHLQALETRRVGVVFTPADYGKVTSLILIRNNLTVVDMVGVEGFGAQELLKVGGRLPGAGGSLRFKVPESTLMDCHRQLKDSKQILSITKNFKVENIGPLPITVTSLKINGYNCQGYGFEVLDCHPFSLSPNTSRDISIVFTPDFTSSWVIRELTLVTAADLEFHFTLNVTLPHHMLPLCAEVVPGPSWEESFWRLTVFFVSLSLLGVILIAFQQAQYILMEFMKTRQRQNGSSSSQQNGDPVAMISSHPHKSTCKNFLDTYSPSDKGRGKSCLPVGPSLSRLQNAAKRSPATYGHSQKKHKCSFYYSKQKPSASAASSANVTTEEKQTVTLASSLSVAKEDICTNVLSENWVSLRYASGINGSLQKNLTLPKNVLHKEESSLKNTVVTNTPSECSMKEGVHTYMFPKETDSKISENVAELKEQEPCPQKTSKKPPESTLPKTPPQYLQSDLPEVSRKHGNKQQAPVRSEVDSFEPVRAADAEPSSVRKTQGASPEDTCSEKQDTPSAEQEDPSRKRKLQERREGSTQALNWNKTRPCRRNKKRASAQASSSPRPSEQSEQRLVCSDVRSWCAQDGAGEKCKAGTEVSGSSPERREEDSYYQKSEKKCADKFCSDSSSDCGSSSGSVRASRGSWGSWSSSSSDCDRRPVVDIQHFLPPGDGVSPQNFPSEASVPLSLPQHVCSSTDVSVLPEFTESPCPGLPATPAGAGEEKGLYPPGGLWPSQPVCLTSSFNCPVENGAPGVSQEPTSIPDSSFIDWSASCEGQFPSVYCPLELNDYNAFPEENMNYTNGFPCSSKVQTDFIGHSTPSTWNTPASMPAAWGHASLVNSPSYLTSTRSLSPMSGLFGSIWAPQSEVYETCCPISPATEHATHMENQVMCKEYYLGFNPFRAYMNLDIWTSTANRNANFPLSRDSSYCGNM</sequence>
<protein>
    <recommendedName>
        <fullName>Transmembrane protein 131-like</fullName>
    </recommendedName>
</protein>
<evidence type="ECO:0000250" key="1">
    <source>
        <dbReference type="UniProtKB" id="A2VDJ0"/>
    </source>
</evidence>
<evidence type="ECO:0000255" key="2"/>
<evidence type="ECO:0000256" key="3">
    <source>
        <dbReference type="SAM" id="MobiDB-lite"/>
    </source>
</evidence>
<evidence type="ECO:0000303" key="4">
    <source>
    </source>
</evidence>
<evidence type="ECO:0000303" key="5">
    <source>
    </source>
</evidence>
<evidence type="ECO:0000305" key="6"/>
<feature type="signal peptide" evidence="2">
    <location>
        <begin position="1"/>
        <end position="40"/>
    </location>
</feature>
<feature type="chain" id="PRO_0000328866" description="Transmembrane protein 131-like">
    <location>
        <begin position="41"/>
        <end position="1597"/>
    </location>
</feature>
<feature type="topological domain" description="Extracellular" evidence="2">
    <location>
        <begin position="41"/>
        <end position="869"/>
    </location>
</feature>
<feature type="transmembrane region" description="Helical" evidence="2">
    <location>
        <begin position="870"/>
        <end position="890"/>
    </location>
</feature>
<feature type="topological domain" description="Cytoplasmic" evidence="2">
    <location>
        <begin position="891"/>
        <end position="1597"/>
    </location>
</feature>
<feature type="region of interest" description="Required for Wnt-signaling inhibition and LRP6 degradation" evidence="1">
    <location>
        <begin position="696"/>
        <end position="916"/>
    </location>
</feature>
<feature type="region of interest" description="Disordered" evidence="3">
    <location>
        <begin position="907"/>
        <end position="928"/>
    </location>
</feature>
<feature type="region of interest" description="Disordered" evidence="3">
    <location>
        <begin position="1096"/>
        <end position="1240"/>
    </location>
</feature>
<feature type="region of interest" description="Disordered" evidence="3">
    <location>
        <begin position="1252"/>
        <end position="1322"/>
    </location>
</feature>
<feature type="compositionally biased region" description="Low complexity" evidence="3">
    <location>
        <begin position="907"/>
        <end position="917"/>
    </location>
</feature>
<feature type="compositionally biased region" description="Basic residues" evidence="3">
    <location>
        <begin position="1213"/>
        <end position="1222"/>
    </location>
</feature>
<feature type="compositionally biased region" description="Low complexity" evidence="3">
    <location>
        <begin position="1223"/>
        <end position="1239"/>
    </location>
</feature>
<feature type="compositionally biased region" description="Basic and acidic residues" evidence="3">
    <location>
        <begin position="1269"/>
        <end position="1290"/>
    </location>
</feature>
<feature type="compositionally biased region" description="Low complexity" evidence="3">
    <location>
        <begin position="1291"/>
        <end position="1319"/>
    </location>
</feature>
<feature type="glycosylation site" description="N-linked (GlcNAc...) asparagine" evidence="2">
    <location>
        <position position="343"/>
    </location>
</feature>
<feature type="glycosylation site" description="N-linked (GlcNAc...) asparagine" evidence="2">
    <location>
        <position position="593"/>
    </location>
</feature>
<feature type="glycosylation site" description="N-linked (GlcNAc...) asparagine" evidence="2">
    <location>
        <position position="709"/>
    </location>
</feature>
<feature type="glycosylation site" description="N-linked (GlcNAc...) asparagine" evidence="2">
    <location>
        <position position="846"/>
    </location>
</feature>
<feature type="splice variant" id="VSP_032832" description="In isoform 3." evidence="5">
    <original>KS</original>
    <variation>N</variation>
    <location>
        <begin position="929"/>
        <end position="930"/>
    </location>
</feature>
<feature type="splice variant" id="VSP_032833" description="In isoform 2 and isoform 3." evidence="4 5">
    <location>
        <begin position="1275"/>
        <end position="1335"/>
    </location>
</feature>
<feature type="splice variant" id="VSP_032834" description="In isoform 3." evidence="5">
    <location>
        <position position="1430"/>
    </location>
</feature>
<feature type="sequence conflict" description="In Ref. 3; BAC98050." evidence="6" ref="3">
    <original>S</original>
    <variation>L</variation>
    <location>
        <position position="357"/>
    </location>
</feature>
<feature type="sequence conflict" description="In Ref. 3; BAC98050." evidence="6" ref="3">
    <original>K</original>
    <variation>R</variation>
    <location>
        <position position="368"/>
    </location>
</feature>
<feature type="sequence conflict" description="In Ref. 3; BAC98050." evidence="6" ref="3">
    <original>Q</original>
    <variation>H</variation>
    <location>
        <position position="384"/>
    </location>
</feature>
<feature type="sequence conflict" description="In Ref. 3; BAC98050." evidence="6" ref="3">
    <original>S</original>
    <variation>A</variation>
    <location>
        <position position="563"/>
    </location>
</feature>
<feature type="sequence conflict" description="In Ref. 2; AAH62940." evidence="6" ref="2">
    <original>I</original>
    <variation>S</variation>
    <location>
        <position position="814"/>
    </location>
</feature>
<feature type="sequence conflict" description="In Ref. 2; AAH23391." evidence="6" ref="2">
    <original>M</original>
    <variation>I</variation>
    <location>
        <position position="901"/>
    </location>
</feature>
<feature type="sequence conflict" description="In Ref. 2; AAH23391." evidence="6" ref="2">
    <original>S</original>
    <variation>P</variation>
    <location>
        <position position="1014"/>
    </location>
</feature>
<feature type="sequence conflict" description="In Ref. 2; AAH23391." evidence="6" ref="2">
    <original>Y</original>
    <variation>C</variation>
    <location>
        <position position="1081"/>
    </location>
</feature>
<feature type="sequence conflict" description="In Ref. 1; BAC40642." evidence="6" ref="1">
    <original>R</original>
    <variation>G</variation>
    <location>
        <position position="1192"/>
    </location>
</feature>
<feature type="sequence conflict" description="In Ref. 2; AAH23391." evidence="6" ref="2">
    <original>K</original>
    <variation>T</variation>
    <location>
        <position position="1257"/>
    </location>
</feature>
<reference key="1">
    <citation type="journal article" date="2005" name="Science">
        <title>The transcriptional landscape of the mammalian genome.</title>
        <authorList>
            <person name="Carninci P."/>
            <person name="Kasukawa T."/>
            <person name="Katayama S."/>
            <person name="Gough J."/>
            <person name="Frith M.C."/>
            <person name="Maeda N."/>
            <person name="Oyama R."/>
            <person name="Ravasi T."/>
            <person name="Lenhard B."/>
            <person name="Wells C."/>
            <person name="Kodzius R."/>
            <person name="Shimokawa K."/>
            <person name="Bajic V.B."/>
            <person name="Brenner S.E."/>
            <person name="Batalov S."/>
            <person name="Forrest A.R."/>
            <person name="Zavolan M."/>
            <person name="Davis M.J."/>
            <person name="Wilming L.G."/>
            <person name="Aidinis V."/>
            <person name="Allen J.E."/>
            <person name="Ambesi-Impiombato A."/>
            <person name="Apweiler R."/>
            <person name="Aturaliya R.N."/>
            <person name="Bailey T.L."/>
            <person name="Bansal M."/>
            <person name="Baxter L."/>
            <person name="Beisel K.W."/>
            <person name="Bersano T."/>
            <person name="Bono H."/>
            <person name="Chalk A.M."/>
            <person name="Chiu K.P."/>
            <person name="Choudhary V."/>
            <person name="Christoffels A."/>
            <person name="Clutterbuck D.R."/>
            <person name="Crowe M.L."/>
            <person name="Dalla E."/>
            <person name="Dalrymple B.P."/>
            <person name="de Bono B."/>
            <person name="Della Gatta G."/>
            <person name="di Bernardo D."/>
            <person name="Down T."/>
            <person name="Engstrom P."/>
            <person name="Fagiolini M."/>
            <person name="Faulkner G."/>
            <person name="Fletcher C.F."/>
            <person name="Fukushima T."/>
            <person name="Furuno M."/>
            <person name="Futaki S."/>
            <person name="Gariboldi M."/>
            <person name="Georgii-Hemming P."/>
            <person name="Gingeras T.R."/>
            <person name="Gojobori T."/>
            <person name="Green R.E."/>
            <person name="Gustincich S."/>
            <person name="Harbers M."/>
            <person name="Hayashi Y."/>
            <person name="Hensch T.K."/>
            <person name="Hirokawa N."/>
            <person name="Hill D."/>
            <person name="Huminiecki L."/>
            <person name="Iacono M."/>
            <person name="Ikeo K."/>
            <person name="Iwama A."/>
            <person name="Ishikawa T."/>
            <person name="Jakt M."/>
            <person name="Kanapin A."/>
            <person name="Katoh M."/>
            <person name="Kawasawa Y."/>
            <person name="Kelso J."/>
            <person name="Kitamura H."/>
            <person name="Kitano H."/>
            <person name="Kollias G."/>
            <person name="Krishnan S.P."/>
            <person name="Kruger A."/>
            <person name="Kummerfeld S.K."/>
            <person name="Kurochkin I.V."/>
            <person name="Lareau L.F."/>
            <person name="Lazarevic D."/>
            <person name="Lipovich L."/>
            <person name="Liu J."/>
            <person name="Liuni S."/>
            <person name="McWilliam S."/>
            <person name="Madan Babu M."/>
            <person name="Madera M."/>
            <person name="Marchionni L."/>
            <person name="Matsuda H."/>
            <person name="Matsuzawa S."/>
            <person name="Miki H."/>
            <person name="Mignone F."/>
            <person name="Miyake S."/>
            <person name="Morris K."/>
            <person name="Mottagui-Tabar S."/>
            <person name="Mulder N."/>
            <person name="Nakano N."/>
            <person name="Nakauchi H."/>
            <person name="Ng P."/>
            <person name="Nilsson R."/>
            <person name="Nishiguchi S."/>
            <person name="Nishikawa S."/>
            <person name="Nori F."/>
            <person name="Ohara O."/>
            <person name="Okazaki Y."/>
            <person name="Orlando V."/>
            <person name="Pang K.C."/>
            <person name="Pavan W.J."/>
            <person name="Pavesi G."/>
            <person name="Pesole G."/>
            <person name="Petrovsky N."/>
            <person name="Piazza S."/>
            <person name="Reed J."/>
            <person name="Reid J.F."/>
            <person name="Ring B.Z."/>
            <person name="Ringwald M."/>
            <person name="Rost B."/>
            <person name="Ruan Y."/>
            <person name="Salzberg S.L."/>
            <person name="Sandelin A."/>
            <person name="Schneider C."/>
            <person name="Schoenbach C."/>
            <person name="Sekiguchi K."/>
            <person name="Semple C.A."/>
            <person name="Seno S."/>
            <person name="Sessa L."/>
            <person name="Sheng Y."/>
            <person name="Shibata Y."/>
            <person name="Shimada H."/>
            <person name="Shimada K."/>
            <person name="Silva D."/>
            <person name="Sinclair B."/>
            <person name="Sperling S."/>
            <person name="Stupka E."/>
            <person name="Sugiura K."/>
            <person name="Sultana R."/>
            <person name="Takenaka Y."/>
            <person name="Taki K."/>
            <person name="Tammoja K."/>
            <person name="Tan S.L."/>
            <person name="Tang S."/>
            <person name="Taylor M.S."/>
            <person name="Tegner J."/>
            <person name="Teichmann S.A."/>
            <person name="Ueda H.R."/>
            <person name="van Nimwegen E."/>
            <person name="Verardo R."/>
            <person name="Wei C.L."/>
            <person name="Yagi K."/>
            <person name="Yamanishi H."/>
            <person name="Zabarovsky E."/>
            <person name="Zhu S."/>
            <person name="Zimmer A."/>
            <person name="Hide W."/>
            <person name="Bult C."/>
            <person name="Grimmond S.M."/>
            <person name="Teasdale R.D."/>
            <person name="Liu E.T."/>
            <person name="Brusic V."/>
            <person name="Quackenbush J."/>
            <person name="Wahlestedt C."/>
            <person name="Mattick J.S."/>
            <person name="Hume D.A."/>
            <person name="Kai C."/>
            <person name="Sasaki D."/>
            <person name="Tomaru Y."/>
            <person name="Fukuda S."/>
            <person name="Kanamori-Katayama M."/>
            <person name="Suzuki M."/>
            <person name="Aoki J."/>
            <person name="Arakawa T."/>
            <person name="Iida J."/>
            <person name="Imamura K."/>
            <person name="Itoh M."/>
            <person name="Kato T."/>
            <person name="Kawaji H."/>
            <person name="Kawagashira N."/>
            <person name="Kawashima T."/>
            <person name="Kojima M."/>
            <person name="Kondo S."/>
            <person name="Konno H."/>
            <person name="Nakano K."/>
            <person name="Ninomiya N."/>
            <person name="Nishio T."/>
            <person name="Okada M."/>
            <person name="Plessy C."/>
            <person name="Shibata K."/>
            <person name="Shiraki T."/>
            <person name="Suzuki S."/>
            <person name="Tagami M."/>
            <person name="Waki K."/>
            <person name="Watahiki A."/>
            <person name="Okamura-Oho Y."/>
            <person name="Suzuki H."/>
            <person name="Kawai J."/>
            <person name="Hayashizaki Y."/>
        </authorList>
    </citation>
    <scope>NUCLEOTIDE SEQUENCE [LARGE SCALE MRNA] (ISOFORM 1)</scope>
    <source>
        <strain>NOD</strain>
        <tissue>Thymus</tissue>
    </source>
</reference>
<reference key="2">
    <citation type="journal article" date="2004" name="Genome Res.">
        <title>The status, quality, and expansion of the NIH full-length cDNA project: the Mammalian Gene Collection (MGC).</title>
        <authorList>
            <consortium name="The MGC Project Team"/>
        </authorList>
    </citation>
    <scope>NUCLEOTIDE SEQUENCE [LARGE SCALE MRNA] (ISOFORM 3)</scope>
    <scope>NUCLEOTIDE SEQUENCE [LARGE SCALE MRNA] OF 654-1597 (ISOFORM 2)</scope>
    <source>
        <strain>C57BL/6J</strain>
        <strain>Czech II</strain>
        <strain>FVB/N</strain>
        <tissue>Brain</tissue>
        <tissue>Mammary tumor</tissue>
    </source>
</reference>
<reference key="3">
    <citation type="journal article" date="2003" name="DNA Res.">
        <title>Prediction of the coding sequences of mouse homologues of KIAA gene: III. The complete nucleotide sequences of 500 mouse KIAA-homologous cDNAs identified by screening of terminal sequences of cDNA clones randomly sampled from size-fractionated libraries.</title>
        <authorList>
            <person name="Okazaki N."/>
            <person name="Kikuno R."/>
            <person name="Ohara R."/>
            <person name="Inamoto S."/>
            <person name="Koseki H."/>
            <person name="Hiraoka S."/>
            <person name="Saga Y."/>
            <person name="Nagase T."/>
            <person name="Ohara O."/>
            <person name="Koga H."/>
        </authorList>
    </citation>
    <scope>NUCLEOTIDE SEQUENCE [LARGE SCALE MRNA] OF 191-1597 (ISOFORM 2)</scope>
    <source>
        <tissue>Embryonic tail</tissue>
    </source>
</reference>
<reference key="4">
    <citation type="journal article" date="2010" name="Cell">
        <title>A tissue-specific atlas of mouse protein phosphorylation and expression.</title>
        <authorList>
            <person name="Huttlin E.L."/>
            <person name="Jedrychowski M.P."/>
            <person name="Elias J.E."/>
            <person name="Goswami T."/>
            <person name="Rad R."/>
            <person name="Beausoleil S.A."/>
            <person name="Villen J."/>
            <person name="Haas W."/>
            <person name="Sowa M.E."/>
            <person name="Gygi S.P."/>
        </authorList>
    </citation>
    <scope>IDENTIFICATION BY MASS SPECTROMETRY [LARGE SCALE ANALYSIS]</scope>
    <source>
        <tissue>Lung</tissue>
    </source>
</reference>
<comment type="function">
    <text evidence="1">In its membrane-associated form, antagonizes canonical Wnt signaling by triggering lysosome-dependent degradation of Wnt-activated LRP6. Regulates thymocyte proliferation.</text>
</comment>
<comment type="subcellular location">
    <subcellularLocation>
        <location evidence="1">Cell membrane</location>
        <topology evidence="6">Single-pass type I membrane protein</topology>
    </subcellularLocation>
    <subcellularLocation>
        <location evidence="1">Endoplasmic reticulum</location>
    </subcellularLocation>
    <subcellularLocation>
        <location evidence="1">Cytoplasm</location>
    </subcellularLocation>
    <text evidence="1">During intrathymic development, resides in punctate cytoplasmic structures in DN1 and DN2 cells. In DN3 cells, found in large crescent-shaped membrane structures, which preferentially localize in cell-to-cell contact zones.</text>
</comment>
<comment type="alternative products">
    <event type="alternative splicing"/>
    <isoform>
        <id>Q3U3D7-1</id>
        <name>1</name>
        <sequence type="displayed"/>
    </isoform>
    <isoform>
        <id>Q3U3D7-2</id>
        <name>2</name>
        <sequence type="described" ref="VSP_032833"/>
    </isoform>
    <isoform>
        <id>Q3U3D7-3</id>
        <name>3</name>
        <sequence type="described" ref="VSP_032832 VSP_032833 VSP_032834"/>
    </isoform>
</comment>
<comment type="similarity">
    <text evidence="6">Belongs to the TMEM131 family.</text>
</comment>
<comment type="sequence caution" evidence="6">
    <conflict type="miscellaneous discrepancy">
        <sequence resource="EMBL-CDS" id="AAH29771"/>
    </conflict>
</comment>
<comment type="sequence caution" evidence="6">
    <conflict type="erroneous initiation">
        <sequence resource="EMBL-CDS" id="AAH62940"/>
    </conflict>
    <text>Truncated N-terminus.</text>
</comment>
<comment type="sequence caution" evidence="6">
    <conflict type="erroneous initiation">
        <sequence resource="EMBL-CDS" id="BAC40642"/>
    </conflict>
    <text>Truncated N-terminus.</text>
</comment>
<keyword id="KW-0025">Alternative splicing</keyword>
<keyword id="KW-1003">Cell membrane</keyword>
<keyword id="KW-0963">Cytoplasm</keyword>
<keyword id="KW-0256">Endoplasmic reticulum</keyword>
<keyword id="KW-0325">Glycoprotein</keyword>
<keyword id="KW-0472">Membrane</keyword>
<keyword id="KW-1185">Reference proteome</keyword>
<keyword id="KW-0732">Signal</keyword>
<keyword id="KW-0812">Transmembrane</keyword>
<keyword id="KW-1133">Transmembrane helix</keyword>
<keyword id="KW-0879">Wnt signaling pathway</keyword>
<proteinExistence type="evidence at protein level"/>
<organism>
    <name type="scientific">Mus musculus</name>
    <name type="common">Mouse</name>
    <dbReference type="NCBI Taxonomy" id="10090"/>
    <lineage>
        <taxon>Eukaryota</taxon>
        <taxon>Metazoa</taxon>
        <taxon>Chordata</taxon>
        <taxon>Craniata</taxon>
        <taxon>Vertebrata</taxon>
        <taxon>Euteleostomi</taxon>
        <taxon>Mammalia</taxon>
        <taxon>Eutheria</taxon>
        <taxon>Euarchontoglires</taxon>
        <taxon>Glires</taxon>
        <taxon>Rodentia</taxon>
        <taxon>Myomorpha</taxon>
        <taxon>Muroidea</taxon>
        <taxon>Muridae</taxon>
        <taxon>Murinae</taxon>
        <taxon>Mus</taxon>
        <taxon>Mus</taxon>
    </lineage>
</organism>
<accession>Q3U3D7</accession>
<accession>Q6P5E2</accession>
<accession>Q6PHM5</accession>
<accession>Q6ZQ24</accession>
<accession>Q8C2B9</accession>
<accession>Q8K2U7</accession>
<accession>Q8R3Y2</accession>
<accession>Q8R580</accession>
<name>T131L_MOUSE</name>